<comment type="function">
    <text evidence="1">Catalyzes the attachment of serine to tRNA(Ser). Is also able to aminoacylate tRNA(Sec) with serine, to form the misacylated tRNA L-seryl-tRNA(Sec), which will be further converted into selenocysteinyl-tRNA(Sec).</text>
</comment>
<comment type="catalytic activity">
    <reaction evidence="1">
        <text>tRNA(Ser) + L-serine + ATP = L-seryl-tRNA(Ser) + AMP + diphosphate + H(+)</text>
        <dbReference type="Rhea" id="RHEA:12292"/>
        <dbReference type="Rhea" id="RHEA-COMP:9669"/>
        <dbReference type="Rhea" id="RHEA-COMP:9703"/>
        <dbReference type="ChEBI" id="CHEBI:15378"/>
        <dbReference type="ChEBI" id="CHEBI:30616"/>
        <dbReference type="ChEBI" id="CHEBI:33019"/>
        <dbReference type="ChEBI" id="CHEBI:33384"/>
        <dbReference type="ChEBI" id="CHEBI:78442"/>
        <dbReference type="ChEBI" id="CHEBI:78533"/>
        <dbReference type="ChEBI" id="CHEBI:456215"/>
        <dbReference type="EC" id="6.1.1.11"/>
    </reaction>
</comment>
<comment type="catalytic activity">
    <reaction evidence="1">
        <text>tRNA(Sec) + L-serine + ATP = L-seryl-tRNA(Sec) + AMP + diphosphate + H(+)</text>
        <dbReference type="Rhea" id="RHEA:42580"/>
        <dbReference type="Rhea" id="RHEA-COMP:9742"/>
        <dbReference type="Rhea" id="RHEA-COMP:10128"/>
        <dbReference type="ChEBI" id="CHEBI:15378"/>
        <dbReference type="ChEBI" id="CHEBI:30616"/>
        <dbReference type="ChEBI" id="CHEBI:33019"/>
        <dbReference type="ChEBI" id="CHEBI:33384"/>
        <dbReference type="ChEBI" id="CHEBI:78442"/>
        <dbReference type="ChEBI" id="CHEBI:78533"/>
        <dbReference type="ChEBI" id="CHEBI:456215"/>
        <dbReference type="EC" id="6.1.1.11"/>
    </reaction>
</comment>
<comment type="pathway">
    <text evidence="1">Aminoacyl-tRNA biosynthesis; selenocysteinyl-tRNA(Sec) biosynthesis; L-seryl-tRNA(Sec) from L-serine and tRNA(Sec): step 1/1.</text>
</comment>
<comment type="subunit">
    <text evidence="1">Homodimer. The tRNA molecule binds across the dimer.</text>
</comment>
<comment type="subcellular location">
    <subcellularLocation>
        <location evidence="1">Cytoplasm</location>
    </subcellularLocation>
</comment>
<comment type="domain">
    <text evidence="1">Consists of two distinct domains, a catalytic core and a N-terminal extension that is involved in tRNA binding.</text>
</comment>
<comment type="similarity">
    <text evidence="1">Belongs to the class-II aminoacyl-tRNA synthetase family. Type-1 seryl-tRNA synthetase subfamily.</text>
</comment>
<proteinExistence type="evidence at protein level"/>
<feature type="chain" id="PRO_0000122120" description="Serine--tRNA ligase">
    <location>
        <begin position="1"/>
        <end position="428"/>
    </location>
</feature>
<feature type="binding site" evidence="1">
    <location>
        <begin position="231"/>
        <end position="233"/>
    </location>
    <ligand>
        <name>L-serine</name>
        <dbReference type="ChEBI" id="CHEBI:33384"/>
    </ligand>
</feature>
<feature type="binding site" evidence="1">
    <location>
        <begin position="262"/>
        <end position="264"/>
    </location>
    <ligand>
        <name>ATP</name>
        <dbReference type="ChEBI" id="CHEBI:30616"/>
    </ligand>
</feature>
<feature type="binding site" evidence="1">
    <location>
        <position position="285"/>
    </location>
    <ligand>
        <name>L-serine</name>
        <dbReference type="ChEBI" id="CHEBI:33384"/>
    </ligand>
</feature>
<feature type="binding site" evidence="1">
    <location>
        <begin position="349"/>
        <end position="352"/>
    </location>
    <ligand>
        <name>ATP</name>
        <dbReference type="ChEBI" id="CHEBI:30616"/>
    </ligand>
</feature>
<feature type="binding site" evidence="1">
    <location>
        <position position="385"/>
    </location>
    <ligand>
        <name>L-serine</name>
        <dbReference type="ChEBI" id="CHEBI:33384"/>
    </ligand>
</feature>
<sequence length="428" mass="48640">MLDIRLFRNEPDTVKSKIELRGDDPKVVDEILELDEQRRKLISATEEMKARRNKVSEEIALKKRNKENADDVIAEMRTLGDDIKEKDSQLNEIDNKMTGILCRIPNLISDDVPQGESDEDNVEVKKWGTPREFSFEPKAHWDIVEELKMADFDRAAKVSGARFVYLTNEGAQLERALMNYMITKHTTQHGYTEMMVPQLVNADTMYGTGQLPKFEEDLFKVEKEGLYTIPTAEVPLTNFYRNEIIQPGVLPEKFTGQSACFRSEAGSAGRDTRGLIRLHQFDKVEMVRFEQPEDSWNALEEMTTNAEAILEELGLPYRRVILCTGDIGFSASKTYDIEVWLPSYNDYKEISSCSNCTDFQARRANIRFKRDKAAKPELAHTLNGSGLAVGRTFAAIVENYQNEDGTVTIPEALVPFMGGKTQISKPVK</sequence>
<dbReference type="EC" id="6.1.1.11" evidence="1"/>
<dbReference type="EMBL" id="BA000018">
    <property type="protein sequence ID" value="BAB41225.1"/>
    <property type="molecule type" value="Genomic_DNA"/>
</dbReference>
<dbReference type="PIR" id="A89759">
    <property type="entry name" value="A89759"/>
</dbReference>
<dbReference type="RefSeq" id="WP_000884332.1">
    <property type="nucleotide sequence ID" value="NC_002745.2"/>
</dbReference>
<dbReference type="SMR" id="P99178"/>
<dbReference type="EnsemblBacteria" id="BAB41225">
    <property type="protein sequence ID" value="BAB41225"/>
    <property type="gene ID" value="BAB41225"/>
</dbReference>
<dbReference type="KEGG" id="sau:SA0009"/>
<dbReference type="HOGENOM" id="CLU_023797_1_1_9"/>
<dbReference type="UniPathway" id="UPA00906">
    <property type="reaction ID" value="UER00895"/>
</dbReference>
<dbReference type="GO" id="GO:0005737">
    <property type="term" value="C:cytoplasm"/>
    <property type="evidence" value="ECO:0007669"/>
    <property type="project" value="UniProtKB-SubCell"/>
</dbReference>
<dbReference type="GO" id="GO:0005524">
    <property type="term" value="F:ATP binding"/>
    <property type="evidence" value="ECO:0007669"/>
    <property type="project" value="UniProtKB-UniRule"/>
</dbReference>
<dbReference type="GO" id="GO:0140096">
    <property type="term" value="F:catalytic activity, acting on a protein"/>
    <property type="evidence" value="ECO:0007669"/>
    <property type="project" value="UniProtKB-ARBA"/>
</dbReference>
<dbReference type="GO" id="GO:0004828">
    <property type="term" value="F:serine-tRNA ligase activity"/>
    <property type="evidence" value="ECO:0007669"/>
    <property type="project" value="UniProtKB-UniRule"/>
</dbReference>
<dbReference type="GO" id="GO:0016740">
    <property type="term" value="F:transferase activity"/>
    <property type="evidence" value="ECO:0007669"/>
    <property type="project" value="UniProtKB-ARBA"/>
</dbReference>
<dbReference type="GO" id="GO:0016260">
    <property type="term" value="P:selenocysteine biosynthetic process"/>
    <property type="evidence" value="ECO:0007669"/>
    <property type="project" value="UniProtKB-UniRule"/>
</dbReference>
<dbReference type="GO" id="GO:0006434">
    <property type="term" value="P:seryl-tRNA aminoacylation"/>
    <property type="evidence" value="ECO:0007669"/>
    <property type="project" value="UniProtKB-UniRule"/>
</dbReference>
<dbReference type="CDD" id="cd00770">
    <property type="entry name" value="SerRS_core"/>
    <property type="match status" value="1"/>
</dbReference>
<dbReference type="Gene3D" id="3.30.930.10">
    <property type="entry name" value="Bira Bifunctional Protein, Domain 2"/>
    <property type="match status" value="1"/>
</dbReference>
<dbReference type="Gene3D" id="1.10.287.40">
    <property type="entry name" value="Serine-tRNA synthetase, tRNA binding domain"/>
    <property type="match status" value="1"/>
</dbReference>
<dbReference type="HAMAP" id="MF_00176">
    <property type="entry name" value="Ser_tRNA_synth_type1"/>
    <property type="match status" value="1"/>
</dbReference>
<dbReference type="InterPro" id="IPR002314">
    <property type="entry name" value="aa-tRNA-synt_IIb"/>
</dbReference>
<dbReference type="InterPro" id="IPR006195">
    <property type="entry name" value="aa-tRNA-synth_II"/>
</dbReference>
<dbReference type="InterPro" id="IPR045864">
    <property type="entry name" value="aa-tRNA-synth_II/BPL/LPL"/>
</dbReference>
<dbReference type="InterPro" id="IPR002317">
    <property type="entry name" value="Ser-tRNA-ligase_type_1"/>
</dbReference>
<dbReference type="InterPro" id="IPR015866">
    <property type="entry name" value="Ser-tRNA-synth_1_N"/>
</dbReference>
<dbReference type="InterPro" id="IPR042103">
    <property type="entry name" value="SerRS_1_N_sf"/>
</dbReference>
<dbReference type="InterPro" id="IPR033729">
    <property type="entry name" value="SerRS_core"/>
</dbReference>
<dbReference type="InterPro" id="IPR010978">
    <property type="entry name" value="tRNA-bd_arm"/>
</dbReference>
<dbReference type="NCBIfam" id="TIGR00414">
    <property type="entry name" value="serS"/>
    <property type="match status" value="1"/>
</dbReference>
<dbReference type="PANTHER" id="PTHR43697:SF1">
    <property type="entry name" value="SERINE--TRNA LIGASE"/>
    <property type="match status" value="1"/>
</dbReference>
<dbReference type="PANTHER" id="PTHR43697">
    <property type="entry name" value="SERYL-TRNA SYNTHETASE"/>
    <property type="match status" value="1"/>
</dbReference>
<dbReference type="Pfam" id="PF02403">
    <property type="entry name" value="Seryl_tRNA_N"/>
    <property type="match status" value="1"/>
</dbReference>
<dbReference type="Pfam" id="PF00587">
    <property type="entry name" value="tRNA-synt_2b"/>
    <property type="match status" value="1"/>
</dbReference>
<dbReference type="PIRSF" id="PIRSF001529">
    <property type="entry name" value="Ser-tRNA-synth_IIa"/>
    <property type="match status" value="1"/>
</dbReference>
<dbReference type="PRINTS" id="PR00981">
    <property type="entry name" value="TRNASYNTHSER"/>
</dbReference>
<dbReference type="SUPFAM" id="SSF55681">
    <property type="entry name" value="Class II aaRS and biotin synthetases"/>
    <property type="match status" value="1"/>
</dbReference>
<dbReference type="SUPFAM" id="SSF46589">
    <property type="entry name" value="tRNA-binding arm"/>
    <property type="match status" value="1"/>
</dbReference>
<dbReference type="PROSITE" id="PS50862">
    <property type="entry name" value="AA_TRNA_LIGASE_II"/>
    <property type="match status" value="1"/>
</dbReference>
<protein>
    <recommendedName>
        <fullName evidence="1">Serine--tRNA ligase</fullName>
        <ecNumber evidence="1">6.1.1.11</ecNumber>
    </recommendedName>
    <alternativeName>
        <fullName evidence="1">Seryl-tRNA synthetase</fullName>
        <shortName evidence="1">SerRS</shortName>
    </alternativeName>
    <alternativeName>
        <fullName evidence="1">Seryl-tRNA(Ser/Sec) synthetase</fullName>
    </alternativeName>
</protein>
<name>SYS_STAAN</name>
<gene>
    <name evidence="1" type="primary">serS</name>
    <name type="ordered locus">SA0009</name>
</gene>
<keyword id="KW-0030">Aminoacyl-tRNA synthetase</keyword>
<keyword id="KW-0067">ATP-binding</keyword>
<keyword id="KW-0963">Cytoplasm</keyword>
<keyword id="KW-0436">Ligase</keyword>
<keyword id="KW-0547">Nucleotide-binding</keyword>
<keyword id="KW-0648">Protein biosynthesis</keyword>
<organism>
    <name type="scientific">Staphylococcus aureus (strain N315)</name>
    <dbReference type="NCBI Taxonomy" id="158879"/>
    <lineage>
        <taxon>Bacteria</taxon>
        <taxon>Bacillati</taxon>
        <taxon>Bacillota</taxon>
        <taxon>Bacilli</taxon>
        <taxon>Bacillales</taxon>
        <taxon>Staphylococcaceae</taxon>
        <taxon>Staphylococcus</taxon>
    </lineage>
</organism>
<reference key="1">
    <citation type="journal article" date="2001" name="Lancet">
        <title>Whole genome sequencing of meticillin-resistant Staphylococcus aureus.</title>
        <authorList>
            <person name="Kuroda M."/>
            <person name="Ohta T."/>
            <person name="Uchiyama I."/>
            <person name="Baba T."/>
            <person name="Yuzawa H."/>
            <person name="Kobayashi I."/>
            <person name="Cui L."/>
            <person name="Oguchi A."/>
            <person name="Aoki K."/>
            <person name="Nagai Y."/>
            <person name="Lian J.-Q."/>
            <person name="Ito T."/>
            <person name="Kanamori M."/>
            <person name="Matsumaru H."/>
            <person name="Maruyama A."/>
            <person name="Murakami H."/>
            <person name="Hosoyama A."/>
            <person name="Mizutani-Ui Y."/>
            <person name="Takahashi N.K."/>
            <person name="Sawano T."/>
            <person name="Inoue R."/>
            <person name="Kaito C."/>
            <person name="Sekimizu K."/>
            <person name="Hirakawa H."/>
            <person name="Kuhara S."/>
            <person name="Goto S."/>
            <person name="Yabuzaki J."/>
            <person name="Kanehisa M."/>
            <person name="Yamashita A."/>
            <person name="Oshima K."/>
            <person name="Furuya K."/>
            <person name="Yoshino C."/>
            <person name="Shiba T."/>
            <person name="Hattori M."/>
            <person name="Ogasawara N."/>
            <person name="Hayashi H."/>
            <person name="Hiramatsu K."/>
        </authorList>
    </citation>
    <scope>NUCLEOTIDE SEQUENCE [LARGE SCALE GENOMIC DNA]</scope>
    <source>
        <strain>N315</strain>
    </source>
</reference>
<reference key="2">
    <citation type="journal article" date="2005" name="J. Microbiol. Methods">
        <title>Correlation of proteomic and transcriptomic profiles of Staphylococcus aureus during the post-exponential phase of growth.</title>
        <authorList>
            <person name="Scherl A."/>
            <person name="Francois P."/>
            <person name="Bento M."/>
            <person name="Deshusses J.M."/>
            <person name="Charbonnier Y."/>
            <person name="Converset V."/>
            <person name="Huyghe A."/>
            <person name="Walter N."/>
            <person name="Hoogland C."/>
            <person name="Appel R.D."/>
            <person name="Sanchez J.-C."/>
            <person name="Zimmermann-Ivol C.G."/>
            <person name="Corthals G.L."/>
            <person name="Hochstrasser D.F."/>
            <person name="Schrenzel J."/>
        </authorList>
    </citation>
    <scope>IDENTIFICATION BY MASS SPECTROMETRY</scope>
    <source>
        <strain>N315</strain>
    </source>
</reference>
<reference key="3">
    <citation type="submission" date="2007-10" db="UniProtKB">
        <title>Shotgun proteomic analysis of total and membrane protein extracts of S. aureus strain N315.</title>
        <authorList>
            <person name="Vaezzadeh A.R."/>
            <person name="Deshusses J."/>
            <person name="Lescuyer P."/>
            <person name="Hochstrasser D.F."/>
        </authorList>
    </citation>
    <scope>IDENTIFICATION BY MASS SPECTROMETRY [LARGE SCALE ANALYSIS]</scope>
    <source>
        <strain>N315</strain>
    </source>
</reference>
<accession>P99178</accession>
<accession>Q99XG2</accession>
<evidence type="ECO:0000255" key="1">
    <source>
        <dbReference type="HAMAP-Rule" id="MF_00176"/>
    </source>
</evidence>